<gene>
    <name evidence="1" type="primary">proS</name>
    <name type="ordered locus">BSU16570</name>
</gene>
<comment type="function">
    <text evidence="1">Catalyzes the attachment of proline to tRNA(Pro) in a two-step reaction: proline is first activated by ATP to form Pro-AMP and then transferred to the acceptor end of tRNA(Pro). As ProRS can inadvertently accommodate and process non-cognate amino acids such as alanine and cysteine, to avoid such errors it has two additional distinct editing activities against alanine. One activity is designated as 'pretransfer' editing and involves the tRNA(Pro)-independent hydrolysis of activated Ala-AMP. The other activity is designated 'posttransfer' editing and involves deacylation of mischarged Ala-tRNA(Pro). The misacylated Cys-tRNA(Pro) is not edited by ProRS.</text>
</comment>
<comment type="catalytic activity">
    <reaction evidence="1">
        <text>tRNA(Pro) + L-proline + ATP = L-prolyl-tRNA(Pro) + AMP + diphosphate</text>
        <dbReference type="Rhea" id="RHEA:14305"/>
        <dbReference type="Rhea" id="RHEA-COMP:9700"/>
        <dbReference type="Rhea" id="RHEA-COMP:9702"/>
        <dbReference type="ChEBI" id="CHEBI:30616"/>
        <dbReference type="ChEBI" id="CHEBI:33019"/>
        <dbReference type="ChEBI" id="CHEBI:60039"/>
        <dbReference type="ChEBI" id="CHEBI:78442"/>
        <dbReference type="ChEBI" id="CHEBI:78532"/>
        <dbReference type="ChEBI" id="CHEBI:456215"/>
        <dbReference type="EC" id="6.1.1.15"/>
    </reaction>
</comment>
<comment type="subunit">
    <text evidence="1">Homodimer.</text>
</comment>
<comment type="subcellular location">
    <subcellularLocation>
        <location evidence="1">Cytoplasm</location>
    </subcellularLocation>
</comment>
<comment type="domain">
    <text evidence="1">Consists of three domains: the N-terminal catalytic domain, the editing domain and the C-terminal anticodon-binding domain.</text>
</comment>
<comment type="similarity">
    <text evidence="1">Belongs to the class-II aminoacyl-tRNA synthetase family. ProS type 1 subfamily.</text>
</comment>
<organism>
    <name type="scientific">Bacillus subtilis (strain 168)</name>
    <dbReference type="NCBI Taxonomy" id="224308"/>
    <lineage>
        <taxon>Bacteria</taxon>
        <taxon>Bacillati</taxon>
        <taxon>Bacillota</taxon>
        <taxon>Bacilli</taxon>
        <taxon>Bacillales</taxon>
        <taxon>Bacillaceae</taxon>
        <taxon>Bacillus</taxon>
    </lineage>
</organism>
<reference key="1">
    <citation type="journal article" date="1997" name="Nature">
        <title>The complete genome sequence of the Gram-positive bacterium Bacillus subtilis.</title>
        <authorList>
            <person name="Kunst F."/>
            <person name="Ogasawara N."/>
            <person name="Moszer I."/>
            <person name="Albertini A.M."/>
            <person name="Alloni G."/>
            <person name="Azevedo V."/>
            <person name="Bertero M.G."/>
            <person name="Bessieres P."/>
            <person name="Bolotin A."/>
            <person name="Borchert S."/>
            <person name="Borriss R."/>
            <person name="Boursier L."/>
            <person name="Brans A."/>
            <person name="Braun M."/>
            <person name="Brignell S.C."/>
            <person name="Bron S."/>
            <person name="Brouillet S."/>
            <person name="Bruschi C.V."/>
            <person name="Caldwell B."/>
            <person name="Capuano V."/>
            <person name="Carter N.M."/>
            <person name="Choi S.-K."/>
            <person name="Codani J.-J."/>
            <person name="Connerton I.F."/>
            <person name="Cummings N.J."/>
            <person name="Daniel R.A."/>
            <person name="Denizot F."/>
            <person name="Devine K.M."/>
            <person name="Duesterhoeft A."/>
            <person name="Ehrlich S.D."/>
            <person name="Emmerson P.T."/>
            <person name="Entian K.-D."/>
            <person name="Errington J."/>
            <person name="Fabret C."/>
            <person name="Ferrari E."/>
            <person name="Foulger D."/>
            <person name="Fritz C."/>
            <person name="Fujita M."/>
            <person name="Fujita Y."/>
            <person name="Fuma S."/>
            <person name="Galizzi A."/>
            <person name="Galleron N."/>
            <person name="Ghim S.-Y."/>
            <person name="Glaser P."/>
            <person name="Goffeau A."/>
            <person name="Golightly E.J."/>
            <person name="Grandi G."/>
            <person name="Guiseppi G."/>
            <person name="Guy B.J."/>
            <person name="Haga K."/>
            <person name="Haiech J."/>
            <person name="Harwood C.R."/>
            <person name="Henaut A."/>
            <person name="Hilbert H."/>
            <person name="Holsappel S."/>
            <person name="Hosono S."/>
            <person name="Hullo M.-F."/>
            <person name="Itaya M."/>
            <person name="Jones L.-M."/>
            <person name="Joris B."/>
            <person name="Karamata D."/>
            <person name="Kasahara Y."/>
            <person name="Klaerr-Blanchard M."/>
            <person name="Klein C."/>
            <person name="Kobayashi Y."/>
            <person name="Koetter P."/>
            <person name="Koningstein G."/>
            <person name="Krogh S."/>
            <person name="Kumano M."/>
            <person name="Kurita K."/>
            <person name="Lapidus A."/>
            <person name="Lardinois S."/>
            <person name="Lauber J."/>
            <person name="Lazarevic V."/>
            <person name="Lee S.-M."/>
            <person name="Levine A."/>
            <person name="Liu H."/>
            <person name="Masuda S."/>
            <person name="Mauel C."/>
            <person name="Medigue C."/>
            <person name="Medina N."/>
            <person name="Mellado R.P."/>
            <person name="Mizuno M."/>
            <person name="Moestl D."/>
            <person name="Nakai S."/>
            <person name="Noback M."/>
            <person name="Noone D."/>
            <person name="O'Reilly M."/>
            <person name="Ogawa K."/>
            <person name="Ogiwara A."/>
            <person name="Oudega B."/>
            <person name="Park S.-H."/>
            <person name="Parro V."/>
            <person name="Pohl T.M."/>
            <person name="Portetelle D."/>
            <person name="Porwollik S."/>
            <person name="Prescott A.M."/>
            <person name="Presecan E."/>
            <person name="Pujic P."/>
            <person name="Purnelle B."/>
            <person name="Rapoport G."/>
            <person name="Rey M."/>
            <person name="Reynolds S."/>
            <person name="Rieger M."/>
            <person name="Rivolta C."/>
            <person name="Rocha E."/>
            <person name="Roche B."/>
            <person name="Rose M."/>
            <person name="Sadaie Y."/>
            <person name="Sato T."/>
            <person name="Scanlan E."/>
            <person name="Schleich S."/>
            <person name="Schroeter R."/>
            <person name="Scoffone F."/>
            <person name="Sekiguchi J."/>
            <person name="Sekowska A."/>
            <person name="Seror S.J."/>
            <person name="Serror P."/>
            <person name="Shin B.-S."/>
            <person name="Soldo B."/>
            <person name="Sorokin A."/>
            <person name="Tacconi E."/>
            <person name="Takagi T."/>
            <person name="Takahashi H."/>
            <person name="Takemaru K."/>
            <person name="Takeuchi M."/>
            <person name="Tamakoshi A."/>
            <person name="Tanaka T."/>
            <person name="Terpstra P."/>
            <person name="Tognoni A."/>
            <person name="Tosato V."/>
            <person name="Uchiyama S."/>
            <person name="Vandenbol M."/>
            <person name="Vannier F."/>
            <person name="Vassarotti A."/>
            <person name="Viari A."/>
            <person name="Wambutt R."/>
            <person name="Wedler E."/>
            <person name="Wedler H."/>
            <person name="Weitzenegger T."/>
            <person name="Winters P."/>
            <person name="Wipat A."/>
            <person name="Yamamoto H."/>
            <person name="Yamane K."/>
            <person name="Yasumoto K."/>
            <person name="Yata K."/>
            <person name="Yoshida K."/>
            <person name="Yoshikawa H.-F."/>
            <person name="Zumstein E."/>
            <person name="Yoshikawa H."/>
            <person name="Danchin A."/>
        </authorList>
    </citation>
    <scope>NUCLEOTIDE SEQUENCE [LARGE SCALE GENOMIC DNA]</scope>
    <source>
        <strain>168</strain>
    </source>
</reference>
<dbReference type="EC" id="6.1.1.15" evidence="1"/>
<dbReference type="EMBL" id="AL009126">
    <property type="protein sequence ID" value="CAB13530.1"/>
    <property type="molecule type" value="Genomic_DNA"/>
</dbReference>
<dbReference type="PIR" id="G69682">
    <property type="entry name" value="G69682"/>
</dbReference>
<dbReference type="RefSeq" id="NP_389539.1">
    <property type="nucleotide sequence ID" value="NC_000964.3"/>
</dbReference>
<dbReference type="RefSeq" id="WP_003231918.1">
    <property type="nucleotide sequence ID" value="NZ_OZ025638.1"/>
</dbReference>
<dbReference type="SMR" id="O31755"/>
<dbReference type="FunCoup" id="O31755">
    <property type="interactions" value="480"/>
</dbReference>
<dbReference type="IntAct" id="O31755">
    <property type="interactions" value="1"/>
</dbReference>
<dbReference type="MINT" id="O31755"/>
<dbReference type="STRING" id="224308.BSU16570"/>
<dbReference type="jPOST" id="O31755"/>
<dbReference type="PaxDb" id="224308-BSU16570"/>
<dbReference type="EnsemblBacteria" id="CAB13530">
    <property type="protein sequence ID" value="CAB13530"/>
    <property type="gene ID" value="BSU_16570"/>
</dbReference>
<dbReference type="GeneID" id="939617"/>
<dbReference type="KEGG" id="bsu:BSU16570"/>
<dbReference type="PATRIC" id="fig|224308.179.peg.1798"/>
<dbReference type="eggNOG" id="COG0442">
    <property type="taxonomic scope" value="Bacteria"/>
</dbReference>
<dbReference type="InParanoid" id="O31755"/>
<dbReference type="OrthoDB" id="9809052at2"/>
<dbReference type="PhylomeDB" id="O31755"/>
<dbReference type="BioCyc" id="BSUB:BSU16570-MONOMER"/>
<dbReference type="Proteomes" id="UP000001570">
    <property type="component" value="Chromosome"/>
</dbReference>
<dbReference type="GO" id="GO:0005829">
    <property type="term" value="C:cytosol"/>
    <property type="evidence" value="ECO:0000318"/>
    <property type="project" value="GO_Central"/>
</dbReference>
<dbReference type="GO" id="GO:0002161">
    <property type="term" value="F:aminoacyl-tRNA deacylase activity"/>
    <property type="evidence" value="ECO:0007669"/>
    <property type="project" value="InterPro"/>
</dbReference>
<dbReference type="GO" id="GO:0005524">
    <property type="term" value="F:ATP binding"/>
    <property type="evidence" value="ECO:0007669"/>
    <property type="project" value="UniProtKB-UniRule"/>
</dbReference>
<dbReference type="GO" id="GO:0140096">
    <property type="term" value="F:catalytic activity, acting on a protein"/>
    <property type="evidence" value="ECO:0007669"/>
    <property type="project" value="UniProtKB-ARBA"/>
</dbReference>
<dbReference type="GO" id="GO:0004827">
    <property type="term" value="F:proline-tRNA ligase activity"/>
    <property type="evidence" value="ECO:0000318"/>
    <property type="project" value="GO_Central"/>
</dbReference>
<dbReference type="GO" id="GO:0016740">
    <property type="term" value="F:transferase activity"/>
    <property type="evidence" value="ECO:0007669"/>
    <property type="project" value="UniProtKB-ARBA"/>
</dbReference>
<dbReference type="GO" id="GO:0006433">
    <property type="term" value="P:prolyl-tRNA aminoacylation"/>
    <property type="evidence" value="ECO:0000318"/>
    <property type="project" value="GO_Central"/>
</dbReference>
<dbReference type="CDD" id="cd04334">
    <property type="entry name" value="ProRS-INS"/>
    <property type="match status" value="1"/>
</dbReference>
<dbReference type="CDD" id="cd00861">
    <property type="entry name" value="ProRS_anticodon_short"/>
    <property type="match status" value="1"/>
</dbReference>
<dbReference type="CDD" id="cd00779">
    <property type="entry name" value="ProRS_core_prok"/>
    <property type="match status" value="1"/>
</dbReference>
<dbReference type="FunFam" id="3.30.930.10:FF:000043">
    <property type="entry name" value="Proline--tRNA ligase"/>
    <property type="match status" value="1"/>
</dbReference>
<dbReference type="FunFam" id="3.40.50.800:FF:000011">
    <property type="entry name" value="Proline--tRNA ligase"/>
    <property type="match status" value="1"/>
</dbReference>
<dbReference type="Gene3D" id="3.40.50.800">
    <property type="entry name" value="Anticodon-binding domain"/>
    <property type="match status" value="1"/>
</dbReference>
<dbReference type="Gene3D" id="3.30.930.10">
    <property type="entry name" value="Bira Bifunctional Protein, Domain 2"/>
    <property type="match status" value="2"/>
</dbReference>
<dbReference type="Gene3D" id="3.90.960.10">
    <property type="entry name" value="YbaK/aminoacyl-tRNA synthetase-associated domain"/>
    <property type="match status" value="1"/>
</dbReference>
<dbReference type="HAMAP" id="MF_01569">
    <property type="entry name" value="Pro_tRNA_synth_type1"/>
    <property type="match status" value="1"/>
</dbReference>
<dbReference type="InterPro" id="IPR002314">
    <property type="entry name" value="aa-tRNA-synt_IIb"/>
</dbReference>
<dbReference type="InterPro" id="IPR006195">
    <property type="entry name" value="aa-tRNA-synth_II"/>
</dbReference>
<dbReference type="InterPro" id="IPR045864">
    <property type="entry name" value="aa-tRNA-synth_II/BPL/LPL"/>
</dbReference>
<dbReference type="InterPro" id="IPR004154">
    <property type="entry name" value="Anticodon-bd"/>
</dbReference>
<dbReference type="InterPro" id="IPR036621">
    <property type="entry name" value="Anticodon-bd_dom_sf"/>
</dbReference>
<dbReference type="InterPro" id="IPR002316">
    <property type="entry name" value="Pro-tRNA-ligase_IIa"/>
</dbReference>
<dbReference type="InterPro" id="IPR004500">
    <property type="entry name" value="Pro-tRNA-synth_IIa_bac-type"/>
</dbReference>
<dbReference type="InterPro" id="IPR023717">
    <property type="entry name" value="Pro-tRNA-Synthase_IIa_type1"/>
</dbReference>
<dbReference type="InterPro" id="IPR050062">
    <property type="entry name" value="Pro-tRNA_synthetase"/>
</dbReference>
<dbReference type="InterPro" id="IPR044140">
    <property type="entry name" value="ProRS_anticodon_short"/>
</dbReference>
<dbReference type="InterPro" id="IPR033730">
    <property type="entry name" value="ProRS_core_prok"/>
</dbReference>
<dbReference type="InterPro" id="IPR036754">
    <property type="entry name" value="YbaK/aa-tRNA-synt-asso_dom_sf"/>
</dbReference>
<dbReference type="InterPro" id="IPR007214">
    <property type="entry name" value="YbaK/aa-tRNA-synth-assoc-dom"/>
</dbReference>
<dbReference type="NCBIfam" id="NF006625">
    <property type="entry name" value="PRK09194.1"/>
    <property type="match status" value="1"/>
</dbReference>
<dbReference type="NCBIfam" id="TIGR00409">
    <property type="entry name" value="proS_fam_II"/>
    <property type="match status" value="1"/>
</dbReference>
<dbReference type="PANTHER" id="PTHR42753">
    <property type="entry name" value="MITOCHONDRIAL RIBOSOME PROTEIN L39/PROLYL-TRNA LIGASE FAMILY MEMBER"/>
    <property type="match status" value="1"/>
</dbReference>
<dbReference type="PANTHER" id="PTHR42753:SF2">
    <property type="entry name" value="PROLINE--TRNA LIGASE"/>
    <property type="match status" value="1"/>
</dbReference>
<dbReference type="Pfam" id="PF03129">
    <property type="entry name" value="HGTP_anticodon"/>
    <property type="match status" value="1"/>
</dbReference>
<dbReference type="Pfam" id="PF00587">
    <property type="entry name" value="tRNA-synt_2b"/>
    <property type="match status" value="1"/>
</dbReference>
<dbReference type="Pfam" id="PF04073">
    <property type="entry name" value="tRNA_edit"/>
    <property type="match status" value="1"/>
</dbReference>
<dbReference type="PIRSF" id="PIRSF001535">
    <property type="entry name" value="ProRS_1"/>
    <property type="match status" value="1"/>
</dbReference>
<dbReference type="PRINTS" id="PR01046">
    <property type="entry name" value="TRNASYNTHPRO"/>
</dbReference>
<dbReference type="SUPFAM" id="SSF52954">
    <property type="entry name" value="Class II aaRS ABD-related"/>
    <property type="match status" value="1"/>
</dbReference>
<dbReference type="SUPFAM" id="SSF55681">
    <property type="entry name" value="Class II aaRS and biotin synthetases"/>
    <property type="match status" value="1"/>
</dbReference>
<dbReference type="SUPFAM" id="SSF55826">
    <property type="entry name" value="YbaK/ProRS associated domain"/>
    <property type="match status" value="1"/>
</dbReference>
<dbReference type="PROSITE" id="PS50862">
    <property type="entry name" value="AA_TRNA_LIGASE_II"/>
    <property type="match status" value="1"/>
</dbReference>
<protein>
    <recommendedName>
        <fullName evidence="1">Proline--tRNA ligase</fullName>
        <ecNumber evidence="1">6.1.1.15</ecNumber>
    </recommendedName>
    <alternativeName>
        <fullName evidence="1">Prolyl-tRNA synthetase</fullName>
        <shortName evidence="1">ProRS</shortName>
    </alternativeName>
</protein>
<accession>O31755</accession>
<feature type="chain" id="PRO_0000139320" description="Proline--tRNA ligase">
    <location>
        <begin position="1"/>
        <end position="564"/>
    </location>
</feature>
<sequence>MRQSLTLIPTLREVPADAEAKSHQLLLRAGFIRQNTSGVYSYMPLAYKVIQNIQQIVREEMEKIDAVEMLMPALQQAETWQESGRWYTYGPELMRLKDRHGREFALGATHEEVITSLVRDEVKSYKRLPLTLYQIQSKFRDEKRPRFGLLRGREFIMKDAYSFHASAESLDETYQKMYEAYSNIFARCGINVRPVIADSGAMGGKDTHEFMALSAIGEDTIAYSDESQYAANIEMAEVLHQEVPSDEEPKALEKVHTPNVKTIEELTAFLQVSAEACIKSVLFKADDRFVLVLVRGDHEVNDIKVKNLLHAEVVELATHEEVIQQLGTEPGFVGPVGIHQDVEVYADQAVKAMVNAVAGANEGDHHYKNVNVNRDAQIKEFADLRFIKEGDPSPDGKGTIRFAEGIEVGQVFKLGTRYSEAMNATYLDENGRAQPMLMGCYGIGVSRTLSAIAEQHHDEKGLIWPKSVAPYDLHILALNMKNDGQRELAEKLYADLKAEGYEVLYDDRAERAGVKFADSDLIGLPIRITVGKRADEGIVEVKIRQTGESTEISVDELSAFISKQ</sequence>
<keyword id="KW-0030">Aminoacyl-tRNA synthetase</keyword>
<keyword id="KW-0067">ATP-binding</keyword>
<keyword id="KW-0963">Cytoplasm</keyword>
<keyword id="KW-0436">Ligase</keyword>
<keyword id="KW-0547">Nucleotide-binding</keyword>
<keyword id="KW-0648">Protein biosynthesis</keyword>
<keyword id="KW-1185">Reference proteome</keyword>
<evidence type="ECO:0000255" key="1">
    <source>
        <dbReference type="HAMAP-Rule" id="MF_01569"/>
    </source>
</evidence>
<name>SYP_BACSU</name>
<proteinExistence type="inferred from homology"/>